<feature type="chain" id="PRO_1000008299" description="Translation initiation factor IF-2">
    <location>
        <begin position="1"/>
        <end position="1161"/>
    </location>
</feature>
<feature type="domain" description="tr-type G">
    <location>
        <begin position="653"/>
        <end position="830"/>
    </location>
</feature>
<feature type="region of interest" description="Disordered" evidence="3">
    <location>
        <begin position="67"/>
        <end position="561"/>
    </location>
</feature>
<feature type="region of interest" description="G1" evidence="1">
    <location>
        <begin position="662"/>
        <end position="669"/>
    </location>
</feature>
<feature type="region of interest" description="G2" evidence="1">
    <location>
        <begin position="687"/>
        <end position="691"/>
    </location>
</feature>
<feature type="region of interest" description="G3" evidence="1">
    <location>
        <begin position="712"/>
        <end position="715"/>
    </location>
</feature>
<feature type="region of interest" description="G4" evidence="1">
    <location>
        <begin position="766"/>
        <end position="769"/>
    </location>
</feature>
<feature type="region of interest" description="G5" evidence="1">
    <location>
        <begin position="802"/>
        <end position="804"/>
    </location>
</feature>
<feature type="compositionally biased region" description="Basic and acidic residues" evidence="3">
    <location>
        <begin position="83"/>
        <end position="105"/>
    </location>
</feature>
<feature type="compositionally biased region" description="Polar residues" evidence="3">
    <location>
        <begin position="139"/>
        <end position="154"/>
    </location>
</feature>
<feature type="compositionally biased region" description="Basic and acidic residues" evidence="3">
    <location>
        <begin position="164"/>
        <end position="180"/>
    </location>
</feature>
<feature type="compositionally biased region" description="Basic and acidic residues" evidence="3">
    <location>
        <begin position="211"/>
        <end position="220"/>
    </location>
</feature>
<feature type="compositionally biased region" description="Low complexity" evidence="3">
    <location>
        <begin position="224"/>
        <end position="250"/>
    </location>
</feature>
<feature type="compositionally biased region" description="Low complexity" evidence="3">
    <location>
        <begin position="268"/>
        <end position="282"/>
    </location>
</feature>
<feature type="compositionally biased region" description="Polar residues" evidence="3">
    <location>
        <begin position="295"/>
        <end position="311"/>
    </location>
</feature>
<feature type="compositionally biased region" description="Polar residues" evidence="3">
    <location>
        <begin position="352"/>
        <end position="362"/>
    </location>
</feature>
<feature type="compositionally biased region" description="Polar residues" evidence="3">
    <location>
        <begin position="380"/>
        <end position="393"/>
    </location>
</feature>
<feature type="compositionally biased region" description="Basic and acidic residues" evidence="3">
    <location>
        <begin position="412"/>
        <end position="432"/>
    </location>
</feature>
<feature type="compositionally biased region" description="Polar residues" evidence="3">
    <location>
        <begin position="440"/>
        <end position="461"/>
    </location>
</feature>
<feature type="compositionally biased region" description="Basic and acidic residues" evidence="3">
    <location>
        <begin position="464"/>
        <end position="478"/>
    </location>
</feature>
<feature type="compositionally biased region" description="Basic and acidic residues" evidence="3">
    <location>
        <begin position="543"/>
        <end position="561"/>
    </location>
</feature>
<feature type="binding site" evidence="2">
    <location>
        <begin position="662"/>
        <end position="669"/>
    </location>
    <ligand>
        <name>GTP</name>
        <dbReference type="ChEBI" id="CHEBI:37565"/>
    </ligand>
</feature>
<feature type="binding site" evidence="2">
    <location>
        <begin position="712"/>
        <end position="716"/>
    </location>
    <ligand>
        <name>GTP</name>
        <dbReference type="ChEBI" id="CHEBI:37565"/>
    </ligand>
</feature>
<feature type="binding site" evidence="2">
    <location>
        <begin position="766"/>
        <end position="769"/>
    </location>
    <ligand>
        <name>GTP</name>
        <dbReference type="ChEBI" id="CHEBI:37565"/>
    </ligand>
</feature>
<proteinExistence type="inferred from homology"/>
<sequence>MTISDKIRVYELSRDLKLENKDILDAAQKLSISVKSHSSSMSLEDAKKIKNLIRNGNSGKKIISVSKSSFKAANEQQNNIDNQNKDSNSRSKPLNKEKPSKESLNKKPLLNKPVNKEENSLISSNKKNTAKLKNPNPPSRISNLQSQVLPNSHNKTQHTIKTKNPNEKKNSTKIVQEKKSLNNNSPLRTKSPARPPIQLIEKPKNLTTSNKDIKANKKNDNSLNQRPQQANRLNNNNNFPKKNINNPRIKNTPELVGAPIRREDPKINSNRQNSNSRQPPSNIQASPNRPVIPNRQVTPNRPSNPNRQGVSNRPGGGQNRQGVPNRPGSPYRPGNPNRQGMSNRPGVGGQNRQGAPNRQGSPYRQGDPNRQGGNYRQGDLNRSGSKFNNQNPSGIRKPVAPNELMQLQKTNASDKEKLNRSNFEKQKVEPPKQKAKAPNSRLNASPTAKKTPHRSFTNNSKKPGRSDWDDSAKLEALRNKNPQKQRQKVHIIGENDDSLTSETSGYSGEKVSILSASLARPKKEKSEEPKSQKTTRQFKKKNKETTRQRQKRRAMELRAAKDAKQVRPEMIIVPEDNLTVQELADKLSLESSEIIKSLFFKGITATVTQSLDLATIETVAEEFGVPVLQDDVEEAAKKTVDMIETDDIESLIKRPPVITVMGHVDHGKTSLLDSIRESRVASGEAGGITQHIGAYQVEFEHESKKKKLTFLDTPGHEAFTAMRARGTKVTDVAVLVVAADDGCRPQTLEAISHARAAKVPIVVAINKIDKEGASPDRVKQELSEKDLIAEDWGGDVVMVPVSAIKKQNIDKLLEMILLVSEVEDLQANPERLAKGTVIEAHLDKAKGPVATLLVQNGTLKAGDVLAAGSVLGKIRAMVDEHGNRIKEAGPSCPVEALGFSEVPTAGDEFEVYPDEKTARGIVGERATDARATKLAQQMASRRVSLSSLSTQANDGELKELNLILKADVQGSVEAILGSLEQLPKNEVQVRVLLSAPGEITETDIDLAAASGSVIIGFNTSLASGAKRAADSNNVDIREYEVIYKLLEDIQSAMEGLLEPDLVEESLGQAEVRATFAVGKGAIAGCYIQSGKLQRNCSLRVLRSDKVIFEGNLDSLKRSKDDVKEVNTGFECGVGCDKFSTWNEGDIIEAFKFVTKKRTLNK</sequence>
<reference key="1">
    <citation type="journal article" date="2007" name="PLoS Genet.">
        <title>Patterns and implications of gene gain and loss in the evolution of Prochlorococcus.</title>
        <authorList>
            <person name="Kettler G.C."/>
            <person name="Martiny A.C."/>
            <person name="Huang K."/>
            <person name="Zucker J."/>
            <person name="Coleman M.L."/>
            <person name="Rodrigue S."/>
            <person name="Chen F."/>
            <person name="Lapidus A."/>
            <person name="Ferriera S."/>
            <person name="Johnson J."/>
            <person name="Steglich C."/>
            <person name="Church G.M."/>
            <person name="Richardson P."/>
            <person name="Chisholm S.W."/>
        </authorList>
    </citation>
    <scope>NUCLEOTIDE SEQUENCE [LARGE SCALE GENOMIC DNA]</scope>
    <source>
        <strain>MIT 9515</strain>
    </source>
</reference>
<organism>
    <name type="scientific">Prochlorococcus marinus (strain MIT 9515)</name>
    <dbReference type="NCBI Taxonomy" id="167542"/>
    <lineage>
        <taxon>Bacteria</taxon>
        <taxon>Bacillati</taxon>
        <taxon>Cyanobacteriota</taxon>
        <taxon>Cyanophyceae</taxon>
        <taxon>Synechococcales</taxon>
        <taxon>Prochlorococcaceae</taxon>
        <taxon>Prochlorococcus</taxon>
    </lineage>
</organism>
<dbReference type="EMBL" id="CP000552">
    <property type="protein sequence ID" value="ABM72881.1"/>
    <property type="molecule type" value="Genomic_DNA"/>
</dbReference>
<dbReference type="RefSeq" id="WP_011820974.1">
    <property type="nucleotide sequence ID" value="NC_008817.1"/>
</dbReference>
<dbReference type="SMR" id="A2BYM0"/>
<dbReference type="STRING" id="167542.P9515_16741"/>
<dbReference type="GeneID" id="60201807"/>
<dbReference type="KEGG" id="pmc:P9515_16741"/>
<dbReference type="eggNOG" id="COG0532">
    <property type="taxonomic scope" value="Bacteria"/>
</dbReference>
<dbReference type="HOGENOM" id="CLU_006301_7_0_3"/>
<dbReference type="OrthoDB" id="9811804at2"/>
<dbReference type="Proteomes" id="UP000001589">
    <property type="component" value="Chromosome"/>
</dbReference>
<dbReference type="GO" id="GO:0005829">
    <property type="term" value="C:cytosol"/>
    <property type="evidence" value="ECO:0007669"/>
    <property type="project" value="TreeGrafter"/>
</dbReference>
<dbReference type="GO" id="GO:0005525">
    <property type="term" value="F:GTP binding"/>
    <property type="evidence" value="ECO:0007669"/>
    <property type="project" value="UniProtKB-KW"/>
</dbReference>
<dbReference type="GO" id="GO:0003924">
    <property type="term" value="F:GTPase activity"/>
    <property type="evidence" value="ECO:0007669"/>
    <property type="project" value="UniProtKB-UniRule"/>
</dbReference>
<dbReference type="GO" id="GO:0003743">
    <property type="term" value="F:translation initiation factor activity"/>
    <property type="evidence" value="ECO:0007669"/>
    <property type="project" value="UniProtKB-UniRule"/>
</dbReference>
<dbReference type="CDD" id="cd01887">
    <property type="entry name" value="IF2_eIF5B"/>
    <property type="match status" value="1"/>
</dbReference>
<dbReference type="CDD" id="cd03702">
    <property type="entry name" value="IF2_mtIF2_II"/>
    <property type="match status" value="1"/>
</dbReference>
<dbReference type="CDD" id="cd03692">
    <property type="entry name" value="mtIF2_IVc"/>
    <property type="match status" value="1"/>
</dbReference>
<dbReference type="FunFam" id="2.40.30.10:FF:000007">
    <property type="entry name" value="Translation initiation factor IF-2"/>
    <property type="match status" value="1"/>
</dbReference>
<dbReference type="FunFam" id="2.40.30.10:FF:000008">
    <property type="entry name" value="Translation initiation factor IF-2"/>
    <property type="match status" value="1"/>
</dbReference>
<dbReference type="FunFam" id="3.40.50.10050:FF:000001">
    <property type="entry name" value="Translation initiation factor IF-2"/>
    <property type="match status" value="1"/>
</dbReference>
<dbReference type="FunFam" id="3.40.50.300:FF:000019">
    <property type="entry name" value="Translation initiation factor IF-2"/>
    <property type="match status" value="1"/>
</dbReference>
<dbReference type="Gene3D" id="1.10.10.2480">
    <property type="match status" value="1"/>
</dbReference>
<dbReference type="Gene3D" id="3.40.50.300">
    <property type="entry name" value="P-loop containing nucleotide triphosphate hydrolases"/>
    <property type="match status" value="1"/>
</dbReference>
<dbReference type="Gene3D" id="2.40.30.10">
    <property type="entry name" value="Translation factors"/>
    <property type="match status" value="2"/>
</dbReference>
<dbReference type="Gene3D" id="3.40.50.10050">
    <property type="entry name" value="Translation initiation factor IF- 2, domain 3"/>
    <property type="match status" value="1"/>
</dbReference>
<dbReference type="HAMAP" id="MF_00100_B">
    <property type="entry name" value="IF_2_B"/>
    <property type="match status" value="1"/>
</dbReference>
<dbReference type="InterPro" id="IPR053905">
    <property type="entry name" value="EF-G-like_DII"/>
</dbReference>
<dbReference type="InterPro" id="IPR044145">
    <property type="entry name" value="IF2_II"/>
</dbReference>
<dbReference type="InterPro" id="IPR006847">
    <property type="entry name" value="IF2_N"/>
</dbReference>
<dbReference type="InterPro" id="IPR027417">
    <property type="entry name" value="P-loop_NTPase"/>
</dbReference>
<dbReference type="InterPro" id="IPR005225">
    <property type="entry name" value="Small_GTP-bd"/>
</dbReference>
<dbReference type="InterPro" id="IPR000795">
    <property type="entry name" value="T_Tr_GTP-bd_dom"/>
</dbReference>
<dbReference type="InterPro" id="IPR000178">
    <property type="entry name" value="TF_IF2_bacterial-like"/>
</dbReference>
<dbReference type="InterPro" id="IPR015760">
    <property type="entry name" value="TIF_IF2"/>
</dbReference>
<dbReference type="InterPro" id="IPR023115">
    <property type="entry name" value="TIF_IF2_dom3"/>
</dbReference>
<dbReference type="InterPro" id="IPR036925">
    <property type="entry name" value="TIF_IF2_dom3_sf"/>
</dbReference>
<dbReference type="InterPro" id="IPR009000">
    <property type="entry name" value="Transl_B-barrel_sf"/>
</dbReference>
<dbReference type="NCBIfam" id="TIGR00487">
    <property type="entry name" value="IF-2"/>
    <property type="match status" value="1"/>
</dbReference>
<dbReference type="NCBIfam" id="TIGR00231">
    <property type="entry name" value="small_GTP"/>
    <property type="match status" value="1"/>
</dbReference>
<dbReference type="PANTHER" id="PTHR43381:SF5">
    <property type="entry name" value="TR-TYPE G DOMAIN-CONTAINING PROTEIN"/>
    <property type="match status" value="1"/>
</dbReference>
<dbReference type="PANTHER" id="PTHR43381">
    <property type="entry name" value="TRANSLATION INITIATION FACTOR IF-2-RELATED"/>
    <property type="match status" value="1"/>
</dbReference>
<dbReference type="Pfam" id="PF22042">
    <property type="entry name" value="EF-G_D2"/>
    <property type="match status" value="1"/>
</dbReference>
<dbReference type="Pfam" id="PF00009">
    <property type="entry name" value="GTP_EFTU"/>
    <property type="match status" value="1"/>
</dbReference>
<dbReference type="Pfam" id="PF11987">
    <property type="entry name" value="IF-2"/>
    <property type="match status" value="1"/>
</dbReference>
<dbReference type="Pfam" id="PF04760">
    <property type="entry name" value="IF2_N"/>
    <property type="match status" value="2"/>
</dbReference>
<dbReference type="PRINTS" id="PR00315">
    <property type="entry name" value="ELONGATNFCT"/>
</dbReference>
<dbReference type="SUPFAM" id="SSF52156">
    <property type="entry name" value="Initiation factor IF2/eIF5b, domain 3"/>
    <property type="match status" value="1"/>
</dbReference>
<dbReference type="SUPFAM" id="SSF52540">
    <property type="entry name" value="P-loop containing nucleoside triphosphate hydrolases"/>
    <property type="match status" value="1"/>
</dbReference>
<dbReference type="SUPFAM" id="SSF50447">
    <property type="entry name" value="Translation proteins"/>
    <property type="match status" value="2"/>
</dbReference>
<dbReference type="PROSITE" id="PS51722">
    <property type="entry name" value="G_TR_2"/>
    <property type="match status" value="1"/>
</dbReference>
<dbReference type="PROSITE" id="PS01176">
    <property type="entry name" value="IF2"/>
    <property type="match status" value="1"/>
</dbReference>
<comment type="function">
    <text evidence="2">One of the essential components for the initiation of protein synthesis. Protects formylmethionyl-tRNA from spontaneous hydrolysis and promotes its binding to the 30S ribosomal subunits. Also involved in the hydrolysis of GTP during the formation of the 70S ribosomal complex.</text>
</comment>
<comment type="subcellular location">
    <subcellularLocation>
        <location evidence="2">Cytoplasm</location>
    </subcellularLocation>
</comment>
<comment type="similarity">
    <text evidence="2">Belongs to the TRAFAC class translation factor GTPase superfamily. Classic translation factor GTPase family. IF-2 subfamily.</text>
</comment>
<gene>
    <name evidence="2" type="primary">infB</name>
    <name type="ordered locus">P9515_16741</name>
</gene>
<protein>
    <recommendedName>
        <fullName evidence="2">Translation initiation factor IF-2</fullName>
    </recommendedName>
</protein>
<evidence type="ECO:0000250" key="1"/>
<evidence type="ECO:0000255" key="2">
    <source>
        <dbReference type="HAMAP-Rule" id="MF_00100"/>
    </source>
</evidence>
<evidence type="ECO:0000256" key="3">
    <source>
        <dbReference type="SAM" id="MobiDB-lite"/>
    </source>
</evidence>
<keyword id="KW-0963">Cytoplasm</keyword>
<keyword id="KW-0342">GTP-binding</keyword>
<keyword id="KW-0396">Initiation factor</keyword>
<keyword id="KW-0547">Nucleotide-binding</keyword>
<keyword id="KW-0648">Protein biosynthesis</keyword>
<name>IF2_PROM5</name>
<accession>A2BYM0</accession>